<reference key="1">
    <citation type="journal article" date="2006" name="Proc. Natl. Acad. Sci. U.S.A.">
        <title>Molecular genetic anatomy of inter- and intraserotype variation in the human bacterial pathogen group A Streptococcus.</title>
        <authorList>
            <person name="Beres S.B."/>
            <person name="Richter E.W."/>
            <person name="Nagiec M.J."/>
            <person name="Sumby P."/>
            <person name="Porcella S.F."/>
            <person name="DeLeo F.R."/>
            <person name="Musser J.M."/>
        </authorList>
    </citation>
    <scope>NUCLEOTIDE SEQUENCE [LARGE SCALE GENOMIC DNA]</scope>
    <source>
        <strain>MGAS9429</strain>
    </source>
</reference>
<name>KCY_STRPC</name>
<sequence length="226" mass="25035">MKAIKIAIDGPASSGKSTVAKIIAKNLGYTYLDTGAMYRSATYIALTHGYTGKEVALILEELEKNPIFFKKAKDGSQLVFLGDEDVTLAIRQNDVTNNVSWISALPEIREELVHQQRRIAQAGGIIMDGRDIGTVVLPDAELKIFLVASVEERAERRYKENLEKGIESDFETLKEEIAARDYKDSHRKVSPLKAAEDALIFDTTGVSIDGVVQFIQEKAEKIVDMS</sequence>
<organism>
    <name type="scientific">Streptococcus pyogenes serotype M12 (strain MGAS9429)</name>
    <dbReference type="NCBI Taxonomy" id="370551"/>
    <lineage>
        <taxon>Bacteria</taxon>
        <taxon>Bacillati</taxon>
        <taxon>Bacillota</taxon>
        <taxon>Bacilli</taxon>
        <taxon>Lactobacillales</taxon>
        <taxon>Streptococcaceae</taxon>
        <taxon>Streptococcus</taxon>
    </lineage>
</organism>
<evidence type="ECO:0000255" key="1">
    <source>
        <dbReference type="HAMAP-Rule" id="MF_00238"/>
    </source>
</evidence>
<dbReference type="EC" id="2.7.4.25" evidence="1"/>
<dbReference type="EMBL" id="CP000259">
    <property type="protein sequence ID" value="ABF31861.1"/>
    <property type="molecule type" value="Genomic_DNA"/>
</dbReference>
<dbReference type="RefSeq" id="WP_002990268.1">
    <property type="nucleotide sequence ID" value="NC_008021.1"/>
</dbReference>
<dbReference type="SMR" id="Q1JMF1"/>
<dbReference type="KEGG" id="spk:MGAS9429_Spy0673"/>
<dbReference type="HOGENOM" id="CLU_079959_0_2_9"/>
<dbReference type="Proteomes" id="UP000002433">
    <property type="component" value="Chromosome"/>
</dbReference>
<dbReference type="GO" id="GO:0005829">
    <property type="term" value="C:cytosol"/>
    <property type="evidence" value="ECO:0007669"/>
    <property type="project" value="TreeGrafter"/>
</dbReference>
<dbReference type="GO" id="GO:0005524">
    <property type="term" value="F:ATP binding"/>
    <property type="evidence" value="ECO:0007669"/>
    <property type="project" value="UniProtKB-UniRule"/>
</dbReference>
<dbReference type="GO" id="GO:0036430">
    <property type="term" value="F:CMP kinase activity"/>
    <property type="evidence" value="ECO:0007669"/>
    <property type="project" value="RHEA"/>
</dbReference>
<dbReference type="GO" id="GO:0036431">
    <property type="term" value="F:dCMP kinase activity"/>
    <property type="evidence" value="ECO:0007669"/>
    <property type="project" value="RHEA"/>
</dbReference>
<dbReference type="GO" id="GO:0015949">
    <property type="term" value="P:nucleobase-containing small molecule interconversion"/>
    <property type="evidence" value="ECO:0007669"/>
    <property type="project" value="TreeGrafter"/>
</dbReference>
<dbReference type="GO" id="GO:0006220">
    <property type="term" value="P:pyrimidine nucleotide metabolic process"/>
    <property type="evidence" value="ECO:0007669"/>
    <property type="project" value="UniProtKB-UniRule"/>
</dbReference>
<dbReference type="CDD" id="cd02020">
    <property type="entry name" value="CMPK"/>
    <property type="match status" value="1"/>
</dbReference>
<dbReference type="FunFam" id="3.40.50.300:FF:000484">
    <property type="entry name" value="Cytidylate kinase"/>
    <property type="match status" value="1"/>
</dbReference>
<dbReference type="Gene3D" id="3.40.50.300">
    <property type="entry name" value="P-loop containing nucleotide triphosphate hydrolases"/>
    <property type="match status" value="1"/>
</dbReference>
<dbReference type="HAMAP" id="MF_00238">
    <property type="entry name" value="Cytidyl_kinase_type1"/>
    <property type="match status" value="1"/>
</dbReference>
<dbReference type="InterPro" id="IPR003136">
    <property type="entry name" value="Cytidylate_kin"/>
</dbReference>
<dbReference type="InterPro" id="IPR011994">
    <property type="entry name" value="Cytidylate_kinase_dom"/>
</dbReference>
<dbReference type="InterPro" id="IPR027417">
    <property type="entry name" value="P-loop_NTPase"/>
</dbReference>
<dbReference type="NCBIfam" id="TIGR00017">
    <property type="entry name" value="cmk"/>
    <property type="match status" value="1"/>
</dbReference>
<dbReference type="PANTHER" id="PTHR21299:SF2">
    <property type="entry name" value="CYTIDYLATE KINASE"/>
    <property type="match status" value="1"/>
</dbReference>
<dbReference type="PANTHER" id="PTHR21299">
    <property type="entry name" value="CYTIDYLATE KINASE/PANTOATE-BETA-ALANINE LIGASE"/>
    <property type="match status" value="1"/>
</dbReference>
<dbReference type="Pfam" id="PF02224">
    <property type="entry name" value="Cytidylate_kin"/>
    <property type="match status" value="1"/>
</dbReference>
<dbReference type="SUPFAM" id="SSF52540">
    <property type="entry name" value="P-loop containing nucleoside triphosphate hydrolases"/>
    <property type="match status" value="1"/>
</dbReference>
<keyword id="KW-0067">ATP-binding</keyword>
<keyword id="KW-0963">Cytoplasm</keyword>
<keyword id="KW-0418">Kinase</keyword>
<keyword id="KW-0547">Nucleotide-binding</keyword>
<keyword id="KW-0808">Transferase</keyword>
<gene>
    <name evidence="1" type="primary">cmk</name>
    <name type="ordered locus">MGAS9429_Spy0673</name>
</gene>
<protein>
    <recommendedName>
        <fullName evidence="1">Cytidylate kinase</fullName>
        <shortName evidence="1">CK</shortName>
        <ecNumber evidence="1">2.7.4.25</ecNumber>
    </recommendedName>
    <alternativeName>
        <fullName evidence="1">Cytidine monophosphate kinase</fullName>
        <shortName evidence="1">CMP kinase</shortName>
    </alternativeName>
</protein>
<accession>Q1JMF1</accession>
<comment type="catalytic activity">
    <reaction evidence="1">
        <text>CMP + ATP = CDP + ADP</text>
        <dbReference type="Rhea" id="RHEA:11600"/>
        <dbReference type="ChEBI" id="CHEBI:30616"/>
        <dbReference type="ChEBI" id="CHEBI:58069"/>
        <dbReference type="ChEBI" id="CHEBI:60377"/>
        <dbReference type="ChEBI" id="CHEBI:456216"/>
        <dbReference type="EC" id="2.7.4.25"/>
    </reaction>
</comment>
<comment type="catalytic activity">
    <reaction evidence="1">
        <text>dCMP + ATP = dCDP + ADP</text>
        <dbReference type="Rhea" id="RHEA:25094"/>
        <dbReference type="ChEBI" id="CHEBI:30616"/>
        <dbReference type="ChEBI" id="CHEBI:57566"/>
        <dbReference type="ChEBI" id="CHEBI:58593"/>
        <dbReference type="ChEBI" id="CHEBI:456216"/>
        <dbReference type="EC" id="2.7.4.25"/>
    </reaction>
</comment>
<comment type="subcellular location">
    <subcellularLocation>
        <location evidence="1">Cytoplasm</location>
    </subcellularLocation>
</comment>
<comment type="similarity">
    <text evidence="1">Belongs to the cytidylate kinase family. Type 1 subfamily.</text>
</comment>
<proteinExistence type="inferred from homology"/>
<feature type="chain" id="PRO_1000048296" description="Cytidylate kinase">
    <location>
        <begin position="1"/>
        <end position="226"/>
    </location>
</feature>
<feature type="binding site" evidence="1">
    <location>
        <begin position="10"/>
        <end position="18"/>
    </location>
    <ligand>
        <name>ATP</name>
        <dbReference type="ChEBI" id="CHEBI:30616"/>
    </ligand>
</feature>